<feature type="chain" id="PRO_0000373128" description="SUMO-1 cysteine protease S273R">
    <location>
        <begin position="1"/>
        <end position="273"/>
    </location>
</feature>
<feature type="active site" evidence="2">
    <location>
        <position position="168"/>
    </location>
</feature>
<feature type="active site" evidence="1">
    <location>
        <position position="187"/>
    </location>
</feature>
<feature type="active site" description="Nucleophile" evidence="2">
    <location>
        <position position="232"/>
    </location>
</feature>
<feature type="binding site" evidence="3">
    <location>
        <position position="226"/>
    </location>
    <ligand>
        <name>substrate</name>
    </ligand>
</feature>
<reference key="1">
    <citation type="submission" date="2003-03" db="EMBL/GenBank/DDBJ databases">
        <title>African swine fever virus genomes.</title>
        <authorList>
            <person name="Kutish G.F."/>
            <person name="Rock D.L."/>
        </authorList>
    </citation>
    <scope>NUCLEOTIDE SEQUENCE [LARGE SCALE GENOMIC DNA]</scope>
</reference>
<name>VPRT_ASFWA</name>
<keyword id="KW-1035">Host cytoplasm</keyword>
<keyword id="KW-0945">Host-virus interaction</keyword>
<keyword id="KW-0378">Hydrolase</keyword>
<keyword id="KW-1090">Inhibition of host innate immune response by virus</keyword>
<keyword id="KW-0426">Late protein</keyword>
<keyword id="KW-0645">Protease</keyword>
<keyword id="KW-0788">Thiol protease</keyword>
<keyword id="KW-0899">Viral immunoevasion</keyword>
<keyword id="KW-0946">Virion</keyword>
<proteinExistence type="inferred from homology"/>
<protein>
    <recommendedName>
        <fullName evidence="1">SUMO-1 cysteine protease S273R</fullName>
        <shortName>pS273R</shortName>
        <ecNumber>3.4.22.-</ecNumber>
    </recommendedName>
</protein>
<gene>
    <name type="ordered locus">War-121</name>
</gene>
<dbReference type="EC" id="3.4.22.-"/>
<dbReference type="EMBL" id="AY261366">
    <property type="status" value="NOT_ANNOTATED_CDS"/>
    <property type="molecule type" value="Genomic_DNA"/>
</dbReference>
<dbReference type="SMR" id="P0C9B8"/>
<dbReference type="Proteomes" id="UP000000858">
    <property type="component" value="Segment"/>
</dbReference>
<dbReference type="GO" id="GO:0030430">
    <property type="term" value="C:host cell cytoplasm"/>
    <property type="evidence" value="ECO:0007669"/>
    <property type="project" value="UniProtKB-SubCell"/>
</dbReference>
<dbReference type="GO" id="GO:0044423">
    <property type="term" value="C:virion component"/>
    <property type="evidence" value="ECO:0007669"/>
    <property type="project" value="UniProtKB-KW"/>
</dbReference>
<dbReference type="GO" id="GO:0004197">
    <property type="term" value="F:cysteine-type endopeptidase activity"/>
    <property type="evidence" value="ECO:0007669"/>
    <property type="project" value="InterPro"/>
</dbReference>
<dbReference type="GO" id="GO:0006508">
    <property type="term" value="P:proteolysis"/>
    <property type="evidence" value="ECO:0007669"/>
    <property type="project" value="UniProtKB-KW"/>
</dbReference>
<dbReference type="GO" id="GO:0052170">
    <property type="term" value="P:symbiont-mediated suppression of host innate immune response"/>
    <property type="evidence" value="ECO:0007669"/>
    <property type="project" value="UniProtKB-KW"/>
</dbReference>
<dbReference type="GO" id="GO:0019082">
    <property type="term" value="P:viral protein processing"/>
    <property type="evidence" value="ECO:0007669"/>
    <property type="project" value="InterPro"/>
</dbReference>
<dbReference type="Gene3D" id="3.40.395.10">
    <property type="entry name" value="Adenoviral Proteinase, Chain A"/>
    <property type="match status" value="1"/>
</dbReference>
<dbReference type="InterPro" id="IPR038765">
    <property type="entry name" value="Papain-like_cys_pep_sf"/>
</dbReference>
<dbReference type="InterPro" id="IPR003653">
    <property type="entry name" value="Peptidase_C48_C"/>
</dbReference>
<dbReference type="InterPro" id="IPR016510">
    <property type="entry name" value="VPRT"/>
</dbReference>
<dbReference type="Pfam" id="PF02902">
    <property type="entry name" value="Peptidase_C48"/>
    <property type="match status" value="1"/>
</dbReference>
<dbReference type="PIRSF" id="PIRSF007159">
    <property type="entry name" value="Peptidase_ASVF"/>
    <property type="match status" value="1"/>
</dbReference>
<dbReference type="SUPFAM" id="SSF54001">
    <property type="entry name" value="Cysteine proteinases"/>
    <property type="match status" value="1"/>
</dbReference>
<organismHost>
    <name type="scientific">Ornithodoros</name>
    <name type="common">relapsing fever ticks</name>
    <dbReference type="NCBI Taxonomy" id="6937"/>
</organismHost>
<organismHost>
    <name type="scientific">Phacochoerus aethiopicus</name>
    <name type="common">Warthog</name>
    <dbReference type="NCBI Taxonomy" id="85517"/>
</organismHost>
<organismHost>
    <name type="scientific">Phacochoerus africanus</name>
    <name type="common">Warthog</name>
    <dbReference type="NCBI Taxonomy" id="41426"/>
</organismHost>
<organismHost>
    <name type="scientific">Potamochoerus larvatus</name>
    <name type="common">Bushpig</name>
    <dbReference type="NCBI Taxonomy" id="273792"/>
</organismHost>
<organismHost>
    <name type="scientific">Sus scrofa</name>
    <name type="common">Pig</name>
    <dbReference type="NCBI Taxonomy" id="9823"/>
</organismHost>
<accession>P0C9B8</accession>
<comment type="function">
    <text evidence="2">Cysteine protease that plays several role during infection including processing of the structural polyprotein or inhibition of the host immune response. Catalyzes the maturation of the pp220 and pp62 polyprotein precursors into core-shell proteins. Plays a role in the disruption of host pyroptosis via specific cleavage of gasdermin D/GSDMD. In addition, strongly decreases the host cGAS-STING signaling by targeting IKBKE via its enzymatic activity. Also impairs host FOXJ1-mediated antiviral effect via degradation of FOXJ1.</text>
</comment>
<comment type="subcellular location">
    <subcellularLocation>
        <location evidence="2">Host cytoplasm</location>
    </subcellularLocation>
    <subcellularLocation>
        <location evidence="2">Virion</location>
    </subcellularLocation>
    <text evidence="2">Found in the perinuclear cytoplasmic viral factories during assembly.</text>
</comment>
<comment type="induction">
    <text evidence="2">Expressed in the late phase of the viral replicative cycle.</text>
</comment>
<comment type="similarity">
    <text evidence="4">Belongs to the peptidase C63 family.</text>
</comment>
<organism>
    <name type="scientific">African swine fever virus (isolate Warthog/Namibia/Wart80/1980)</name>
    <name type="common">ASFV</name>
    <dbReference type="NCBI Taxonomy" id="561444"/>
    <lineage>
        <taxon>Viruses</taxon>
        <taxon>Varidnaviria</taxon>
        <taxon>Bamfordvirae</taxon>
        <taxon>Nucleocytoviricota</taxon>
        <taxon>Pokkesviricetes</taxon>
        <taxon>Asfuvirales</taxon>
        <taxon>Asfarviridae</taxon>
        <taxon>Asfivirus</taxon>
        <taxon>African swine fever virus</taxon>
    </lineage>
</organism>
<sequence>MSILEKITSSPSECAEHLTNKDSCLSKKIQKELTSFLQKKETLGCDSESCVITHPAVKAYAQQKGLDLSKELETRFKAPGPRNNTGLLTNFNIDETLQRWAIKYTKFFNCPFSMMDFERVHYKFNQVDMVKVYKGEELQYVEGKVVKRPCNTFGCVLNTDFSTGTGKHWVAIFVDMRGDCWSIEYFNSAGNSPPGPVIRWMERVKQQLLKIHHTVKTLAVTNIRHQRSQTECGPYSLFYIRARLDNVSYAHFISARITDEDMYKFRTHLFRIA</sequence>
<evidence type="ECO:0000250" key="1">
    <source>
        <dbReference type="UniProtKB" id="P0C9B9"/>
    </source>
</evidence>
<evidence type="ECO:0000250" key="2">
    <source>
        <dbReference type="UniProtKB" id="Q00946"/>
    </source>
</evidence>
<evidence type="ECO:0000255" key="3"/>
<evidence type="ECO:0000305" key="4"/>